<sequence>MDITIQHPWFKRALGPFYPNRLFDQVFGEGMFDYDLFPFLSSTISPYYRQSFFRGFLDSGISEVRSDRDRVKHFSPEDLTVKILDDFVEIHGKHSERQDDHGYISREFHRRYRLPSNLNESSISCSLSADGILTFSGPKLMSSLDSSHGERPIPVSREEKPTSAPSS</sequence>
<reference key="1">
    <citation type="journal article" date="1984" name="Eur. J. Biochem.">
        <title>Primary structures of the alpha-crystallin A chains of twenty-eight mammalian species, chicken and frog.</title>
        <authorList>
            <person name="de Jong W.W."/>
            <person name="Zweers A."/>
            <person name="Versteeg M."/>
            <person name="Nuy-Terwindt E.C."/>
        </authorList>
    </citation>
    <scope>PROTEIN SEQUENCE</scope>
    <scope>ACETYLATION AT MET-1</scope>
</reference>
<evidence type="ECO:0000250" key="1"/>
<evidence type="ECO:0000250" key="2">
    <source>
        <dbReference type="UniProtKB" id="P02470"/>
    </source>
</evidence>
<evidence type="ECO:0000250" key="3">
    <source>
        <dbReference type="UniProtKB" id="P02489"/>
    </source>
</evidence>
<evidence type="ECO:0000255" key="4">
    <source>
        <dbReference type="PROSITE-ProRule" id="PRU00285"/>
    </source>
</evidence>
<evidence type="ECO:0000256" key="5">
    <source>
        <dbReference type="SAM" id="MobiDB-lite"/>
    </source>
</evidence>
<evidence type="ECO:0000269" key="6">
    <source>
    </source>
</evidence>
<evidence type="ECO:0000305" key="7"/>
<feature type="chain" id="PRO_0000125901" description="Alpha-crystallin A chain">
    <location>
        <begin position="1"/>
        <end position="167"/>
    </location>
</feature>
<feature type="domain" description="sHSP" evidence="4">
    <location>
        <begin position="47"/>
        <end position="158"/>
    </location>
</feature>
<feature type="region of interest" description="Disordered" evidence="5">
    <location>
        <begin position="143"/>
        <end position="167"/>
    </location>
</feature>
<feature type="compositionally biased region" description="Basic and acidic residues" evidence="5">
    <location>
        <begin position="147"/>
        <end position="161"/>
    </location>
</feature>
<feature type="binding site" evidence="2">
    <location>
        <position position="94"/>
    </location>
    <ligand>
        <name>Zn(2+)</name>
        <dbReference type="ChEBI" id="CHEBI:29105"/>
        <label>1</label>
    </ligand>
</feature>
<feature type="binding site" evidence="2">
    <location>
        <position position="96"/>
    </location>
    <ligand>
        <name>Zn(2+)</name>
        <dbReference type="ChEBI" id="CHEBI:29105"/>
        <label>1</label>
    </ligand>
</feature>
<feature type="binding site" evidence="2">
    <location>
        <position position="101"/>
    </location>
    <ligand>
        <name>Zn(2+)</name>
        <dbReference type="ChEBI" id="CHEBI:29105"/>
        <label>2</label>
    </ligand>
</feature>
<feature type="binding site" evidence="2">
    <location>
        <position position="148"/>
    </location>
    <ligand>
        <name>Zn(2+)</name>
        <dbReference type="ChEBI" id="CHEBI:29105"/>
        <label>3</label>
    </ligand>
</feature>
<feature type="modified residue" description="N-acetylmethionine" evidence="6">
    <location>
        <position position="1"/>
    </location>
</feature>
<feature type="glycosylation site" description="O-linked (GlcNAc) serine" evidence="1">
    <location>
        <position position="156"/>
    </location>
</feature>
<feature type="non-consecutive residues" evidence="7">
    <location>
        <begin position="70"/>
        <end position="71"/>
    </location>
</feature>
<organism>
    <name type="scientific">Pelophylax lessonae</name>
    <name type="common">Pool frog</name>
    <name type="synonym">Rana lessonae</name>
    <dbReference type="NCBI Taxonomy" id="45623"/>
    <lineage>
        <taxon>Eukaryota</taxon>
        <taxon>Metazoa</taxon>
        <taxon>Chordata</taxon>
        <taxon>Craniata</taxon>
        <taxon>Vertebrata</taxon>
        <taxon>Euteleostomi</taxon>
        <taxon>Amphibia</taxon>
        <taxon>Batrachia</taxon>
        <taxon>Anura</taxon>
        <taxon>Neobatrachia</taxon>
        <taxon>Ranoidea</taxon>
        <taxon>Ranidae</taxon>
        <taxon>Pelophylax</taxon>
    </lineage>
</organism>
<dbReference type="PIR" id="A02910">
    <property type="entry name" value="CYFGAA"/>
</dbReference>
<dbReference type="SMR" id="P02507"/>
<dbReference type="GlyCosmos" id="P02507">
    <property type="glycosylation" value="1 site, No reported glycans"/>
</dbReference>
<dbReference type="iPTMnet" id="P02507"/>
<dbReference type="GO" id="GO:0005737">
    <property type="term" value="C:cytoplasm"/>
    <property type="evidence" value="ECO:0007669"/>
    <property type="project" value="UniProtKB-SubCell"/>
</dbReference>
<dbReference type="GO" id="GO:0005634">
    <property type="term" value="C:nucleus"/>
    <property type="evidence" value="ECO:0007669"/>
    <property type="project" value="UniProtKB-SubCell"/>
</dbReference>
<dbReference type="GO" id="GO:0046872">
    <property type="term" value="F:metal ion binding"/>
    <property type="evidence" value="ECO:0007669"/>
    <property type="project" value="UniProtKB-KW"/>
</dbReference>
<dbReference type="GO" id="GO:0005212">
    <property type="term" value="F:structural constituent of eye lens"/>
    <property type="evidence" value="ECO:0007669"/>
    <property type="project" value="UniProtKB-KW"/>
</dbReference>
<dbReference type="GO" id="GO:0051082">
    <property type="term" value="F:unfolded protein binding"/>
    <property type="evidence" value="ECO:0007669"/>
    <property type="project" value="TreeGrafter"/>
</dbReference>
<dbReference type="GO" id="GO:0002088">
    <property type="term" value="P:lens development in camera-type eye"/>
    <property type="evidence" value="ECO:0007669"/>
    <property type="project" value="TreeGrafter"/>
</dbReference>
<dbReference type="GO" id="GO:0043066">
    <property type="term" value="P:negative regulation of apoptotic process"/>
    <property type="evidence" value="ECO:0007669"/>
    <property type="project" value="TreeGrafter"/>
</dbReference>
<dbReference type="GO" id="GO:0042026">
    <property type="term" value="P:protein refolding"/>
    <property type="evidence" value="ECO:0007669"/>
    <property type="project" value="TreeGrafter"/>
</dbReference>
<dbReference type="GO" id="GO:0009408">
    <property type="term" value="P:response to heat"/>
    <property type="evidence" value="ECO:0007669"/>
    <property type="project" value="TreeGrafter"/>
</dbReference>
<dbReference type="Gene3D" id="2.60.40.790">
    <property type="match status" value="1"/>
</dbReference>
<dbReference type="InterPro" id="IPR002068">
    <property type="entry name" value="A-crystallin/Hsp20_dom"/>
</dbReference>
<dbReference type="InterPro" id="IPR001436">
    <property type="entry name" value="Alpha-crystallin/sHSP_animal"/>
</dbReference>
<dbReference type="InterPro" id="IPR003090">
    <property type="entry name" value="Alpha-crystallin_N"/>
</dbReference>
<dbReference type="InterPro" id="IPR008978">
    <property type="entry name" value="HSP20-like_chaperone"/>
</dbReference>
<dbReference type="PANTHER" id="PTHR45640:SF14">
    <property type="entry name" value="ALPHA-CRYSTALLIN A CHAIN"/>
    <property type="match status" value="1"/>
</dbReference>
<dbReference type="PANTHER" id="PTHR45640">
    <property type="entry name" value="HEAT SHOCK PROTEIN HSP-12.2-RELATED"/>
    <property type="match status" value="1"/>
</dbReference>
<dbReference type="Pfam" id="PF00525">
    <property type="entry name" value="Crystallin"/>
    <property type="match status" value="1"/>
</dbReference>
<dbReference type="Pfam" id="PF00011">
    <property type="entry name" value="HSP20"/>
    <property type="match status" value="1"/>
</dbReference>
<dbReference type="PRINTS" id="PR00299">
    <property type="entry name" value="ACRYSTALLIN"/>
</dbReference>
<dbReference type="SUPFAM" id="SSF49764">
    <property type="entry name" value="HSP20-like chaperones"/>
    <property type="match status" value="1"/>
</dbReference>
<dbReference type="PROSITE" id="PS01031">
    <property type="entry name" value="SHSP"/>
    <property type="match status" value="1"/>
</dbReference>
<protein>
    <recommendedName>
        <fullName>Alpha-crystallin A chain</fullName>
    </recommendedName>
</protein>
<gene>
    <name type="primary">CRYAA</name>
</gene>
<name>CRYAA_PELLE</name>
<comment type="function">
    <text evidence="3">Contributes to the transparency and refractive index of the lens. May act as a chaperone, preventing aggregation of various proteins under a wide range of stress conditions.</text>
</comment>
<comment type="subunit">
    <text evidence="2 3">Heteropolymer composed of three CRYAA and one CRYAB subunits (By similarity). Inter-subunit bridging via zinc ions enhances stability, which is crucial as there is no protein turn over in the lens. Can also form homodimers and homotetramers (dimers of dimers) which serve as the building blocks of homooligomers (By similarity). Within homooligomers, the zinc-binding motif is created from residues of 3 different molecules. His-94 and Glu-96 from one molecule are ligands of the zinc ion, and His-101 and His-148 residues from additional molecules complete the site with tetrahedral coordination geometry (By similarity).</text>
</comment>
<comment type="subcellular location">
    <subcellularLocation>
        <location evidence="3">Cytoplasm</location>
    </subcellularLocation>
    <subcellularLocation>
        <location evidence="3">Nucleus</location>
    </subcellularLocation>
    <text evidence="3">Translocates to the nucleus during heat shock.</text>
</comment>
<comment type="similarity">
    <text evidence="4">Belongs to the small heat shock protein (HSP20) family.</text>
</comment>
<accession>P02507</accession>
<proteinExistence type="evidence at protein level"/>
<keyword id="KW-0007">Acetylation</keyword>
<keyword id="KW-0963">Cytoplasm</keyword>
<keyword id="KW-0903">Direct protein sequencing</keyword>
<keyword id="KW-0273">Eye lens protein</keyword>
<keyword id="KW-0325">Glycoprotein</keyword>
<keyword id="KW-0479">Metal-binding</keyword>
<keyword id="KW-0539">Nucleus</keyword>
<keyword id="KW-0862">Zinc</keyword>